<gene>
    <name evidence="9" type="primary">ABCG43</name>
    <name evidence="7 8" type="synonym">PDR5</name>
    <name evidence="12" type="ordered locus">Os07g0522500</name>
    <name evidence="10" type="ordered locus">LOC_Os07g33780</name>
    <name evidence="11" type="ORF">OJ1372_D12.114</name>
</gene>
<comment type="function">
    <text evidence="5 6">ABC transporter modulating cadmium (Cd) import, thus controlling Cd(2+) accumulation to prevent phytotoxicity (PubMed:35640876). Confers high tolerance to Cd in yeast (PubMed:21670506). Prevents leaf bacteria proliferation, such as Xanthomonas oryzae pv. oryzicola (Xoc) RS105 and X.oryzae pv. oryzae (Xoo) PXO99, by triggering Cd accumulation, which in turn impairs bacterial virulence factors (PubMed:35640876).</text>
</comment>
<comment type="subcellular location">
    <subcellularLocation>
        <location evidence="6">Cell membrane</location>
        <topology evidence="1">Multi-pass membrane protein</topology>
    </subcellularLocation>
</comment>
<comment type="tissue specificity">
    <text evidence="5 6">Specifically expressed in the vasculature of roots, stems, panicles, sheaths and leaves.</text>
</comment>
<comment type="induction">
    <text evidence="5 6">Induced by cadmium (Cd) stress in a concentration-dependent manner (PubMed:21670506, PubMed:35640876). Accumulates transiently within 4 to 12 hours in response to the leaf bacteria Xanthomonas oryzae pv. oryzicola (Xoc) RS105 and X.oryzae pv. oryzae (Xoo) PXO99, respectively (PubMed:35640876).</text>
</comment>
<comment type="disruption phenotype">
    <text evidence="6">No visible phenotype in standard conditions.</text>
</comment>
<comment type="similarity">
    <text evidence="10">Belongs to the ABC transporter superfamily. ABCG family. PDR (TC 3.A.1.205) subfamily.</text>
</comment>
<comment type="sequence caution" evidence="10">
    <conflict type="erroneous gene model prediction">
        <sequence resource="EMBL-CDS" id="BAF21727"/>
    </conflict>
</comment>
<comment type="sequence caution" evidence="10">
    <conflict type="erroneous gene model prediction">
        <sequence resource="EMBL-CDS" id="BAT01819"/>
    </conflict>
</comment>
<comment type="sequence caution" evidence="10">
    <conflict type="erroneous gene model prediction">
        <sequence resource="EMBL-CDS" id="CAD59572"/>
    </conflict>
</comment>
<proteinExistence type="evidence at transcript level"/>
<protein>
    <recommendedName>
        <fullName evidence="9">ABC transporter G family member 43</fullName>
        <shortName evidence="9">ABC transporter G43</shortName>
        <shortName evidence="9">OsABCG43</shortName>
        <ecNumber evidence="6">7.2.2.-</ecNumber>
    </recommendedName>
    <alternativeName>
        <fullName evidence="7 8">Protein PLEIOTROPIC DRUG RESISTANCE 5</fullName>
        <shortName evidence="8">OsPDR5</shortName>
    </alternativeName>
</protein>
<feature type="chain" id="PRO_0000234647" description="ABC transporter G family member 43">
    <location>
        <begin position="1"/>
        <end position="1454"/>
    </location>
</feature>
<feature type="transmembrane region" description="Helical" evidence="1">
    <location>
        <begin position="540"/>
        <end position="560"/>
    </location>
</feature>
<feature type="transmembrane region" description="Helical" evidence="1">
    <location>
        <begin position="577"/>
        <end position="597"/>
    </location>
</feature>
<feature type="transmembrane region" description="Helical" evidence="1">
    <location>
        <begin position="613"/>
        <end position="630"/>
    </location>
</feature>
<feature type="transmembrane region" description="Helical" evidence="1">
    <location>
        <begin position="637"/>
        <end position="656"/>
    </location>
</feature>
<feature type="transmembrane region" description="Helical" evidence="1">
    <location>
        <begin position="659"/>
        <end position="679"/>
    </location>
</feature>
<feature type="transmembrane region" description="Helical" evidence="1">
    <location>
        <begin position="684"/>
        <end position="704"/>
    </location>
</feature>
<feature type="transmembrane region" description="Helical" evidence="1">
    <location>
        <begin position="775"/>
        <end position="795"/>
    </location>
</feature>
<feature type="transmembrane region" description="Helical" evidence="1">
    <location>
        <begin position="1196"/>
        <end position="1216"/>
    </location>
</feature>
<feature type="transmembrane region" description="Helical" evidence="1">
    <location>
        <begin position="1236"/>
        <end position="1256"/>
    </location>
</feature>
<feature type="transmembrane region" description="Helical" evidence="1">
    <location>
        <begin position="1284"/>
        <end position="1304"/>
    </location>
</feature>
<feature type="transmembrane region" description="Helical" evidence="1">
    <location>
        <begin position="1314"/>
        <end position="1334"/>
    </location>
</feature>
<feature type="transmembrane region" description="Helical" evidence="1">
    <location>
        <begin position="1341"/>
        <end position="1361"/>
    </location>
</feature>
<feature type="transmembrane region" description="Helical" evidence="1">
    <location>
        <begin position="1372"/>
        <end position="1392"/>
    </location>
</feature>
<feature type="transmembrane region" description="Helical" evidence="1">
    <location>
        <begin position="1423"/>
        <end position="1443"/>
    </location>
</feature>
<feature type="domain" description="ABC transporter 1" evidence="2">
    <location>
        <begin position="170"/>
        <end position="444"/>
    </location>
</feature>
<feature type="domain" description="ABC transmembrane type-2 1" evidence="1">
    <location>
        <begin position="524"/>
        <end position="735"/>
    </location>
</feature>
<feature type="domain" description="ABC transporter 2" evidence="2">
    <location>
        <begin position="852"/>
        <end position="1104"/>
    </location>
</feature>
<feature type="domain" description="ABC transmembrane type-2 2" evidence="1">
    <location>
        <begin position="1178"/>
        <end position="1391"/>
    </location>
</feature>
<feature type="region of interest" description="Disordered" evidence="4">
    <location>
        <begin position="23"/>
        <end position="47"/>
    </location>
</feature>
<feature type="region of interest" description="Disordered" evidence="4">
    <location>
        <begin position="804"/>
        <end position="823"/>
    </location>
</feature>
<feature type="compositionally biased region" description="Basic and acidic residues" evidence="4">
    <location>
        <begin position="25"/>
        <end position="44"/>
    </location>
</feature>
<feature type="binding site" evidence="2">
    <location>
        <begin position="204"/>
        <end position="211"/>
    </location>
    <ligand>
        <name>ATP</name>
        <dbReference type="ChEBI" id="CHEBI:30616"/>
        <label>1</label>
    </ligand>
</feature>
<feature type="binding site" evidence="2">
    <location>
        <begin position="897"/>
        <end position="904"/>
    </location>
    <ligand>
        <name>ATP</name>
        <dbReference type="ChEBI" id="CHEBI:30616"/>
        <label>2</label>
    </ligand>
</feature>
<feature type="glycosylation site" description="N-linked (GlcNAc...) asparagine" evidence="3">
    <location>
        <position position="163"/>
    </location>
</feature>
<feature type="glycosylation site" description="N-linked (GlcNAc...) asparagine" evidence="3">
    <location>
        <position position="393"/>
    </location>
</feature>
<feature type="glycosylation site" description="N-linked (GlcNAc...) asparagine" evidence="3">
    <location>
        <position position="745"/>
    </location>
</feature>
<feature type="glycosylation site" description="N-linked (GlcNAc...) asparagine" evidence="3">
    <location>
        <position position="829"/>
    </location>
</feature>
<feature type="glycosylation site" description="N-linked (GlcNAc...) asparagine" evidence="3">
    <location>
        <position position="832"/>
    </location>
</feature>
<feature type="glycosylation site" description="N-linked (GlcNAc...) asparagine" evidence="3">
    <location>
        <position position="951"/>
    </location>
</feature>
<sequence>MAGEITPSGSRRSWLSSGAASLARSLRDGDDPFRRSAAASRRDAGDDEENLRWAALEKLPTYDRMRRGILRKAVDGGGDGEGAGSLFKADEVDIANLDPREGRELMERVFKAVEDDNERFLRRFRDRLDQVGIELPKIEVRYQHLDIEADVHVGKRALPTLLNATINTLEGLVSLFISSNKRKLKILNDVNGIIKPSRMTLLLGPPSSGKSTLMRALTGKPDKNLKVSGEITYCGHTFKEFYPERTSAYVSQHDLHNPEMTVRETLDFSRRCLGSGARYDMLSELTRRERNAGIKPDPEIDALMKATVVEGKQNNIVTDLVLKALGLDICADTIVGGAMIRGISGGQKKRVTTGEMLTGPATALFMDEISTGLDSSSTFQIVKYIRQVTHVMNATVMMSLLQPPPETYALFDDIVLIAEGYIVYHGPRENILEFFESAGFRCPERKGVADFLQEVTSRKDQQQYWFLEQDHYRYVSVEEFAQNFKKFHVGQKLQKELQVPYDKSKTHPAALTTKKYGLSSLESLKAVMSREWLLMKRNSFLFIFKAFQLFVLGFITMTLFLRTKMPHEKFSDTSKYVGALTASLITIMFNGFGELQLTIDKLPIFYKQRDFLFFPAWTYGLANIILKVPLSLMESSLWIVLTYYVVGFAPAAGRFFKQFLAYFWTHQMALALFRLLGAILRSMVVANTFGMFVLLLIFLFGGFLVSRKDIKPWWIWGYWTSPMMYSNNALSVNEFLASRWAIPNNDSSISAPTIGKAFLQSKGYFTGEWGYWLSIGAMIGFMIVFNILYLCALTFLRPIGSASTVVSDDDTKSELEAESNQEQMSEVINGTNGTENRRSQRGMVLPFQPLSLSFNHMNYYVDMPAEMKAQGFTESRLQLLSDISGAFRPGVLTALVGVSGAGKTTLMDVLAGRKTSGTIEGDIKLSGYPKKQETFARISGYCEQTDIHSPNLTVYESIVYSAWLRLSSEVDKNTRKVFVEEVMSLVELDVLRDALVGLPGVSGLSTEQRKRLTIAVELVANPSIIFMDEPTSGLDARAAAIVMRTVRNTVNTGRTVVCTIHQPSIDIFESFDELLLLKRGGRVIYAGQLGLHSQILVEYFEAIPGVPKITEGYNPATWMLEVSSSLAEARLDIDFAEVYANSALYRSNQELIKQLSVPPPGFQDLSFPTKYSQNFLNQCVANTWKQFQSYWKDPPYNAMRYVMTLLYGLVFGTVFWRRGKNIESVNDLNNLLGATYAAVFFLGAANLLTLLPVVSVERTVFYREKAAGMYSPLSYAFAQGFVEFCYSAVQGVLYTILIYSMIGYEWKADKFFYFLFFMIAAFAYFTLFSMMLVACTASEMLAAVLVSFVLSSWNNFAGFIIPRPLIPVWWRWFYWANPVSWTIYGVIASQFADSDRVVTVPGQSTTMVVKDFLEKNMGFKHDFLGYVVLAHFGYVIIFFFLFGYGIKCLNFQKR</sequence>
<name>AB43G_ORYSJ</name>
<evidence type="ECO:0000255" key="1"/>
<evidence type="ECO:0000255" key="2">
    <source>
        <dbReference type="PROSITE-ProRule" id="PRU00434"/>
    </source>
</evidence>
<evidence type="ECO:0000255" key="3">
    <source>
        <dbReference type="PROSITE-ProRule" id="PRU00498"/>
    </source>
</evidence>
<evidence type="ECO:0000256" key="4">
    <source>
        <dbReference type="SAM" id="MobiDB-lite"/>
    </source>
</evidence>
<evidence type="ECO:0000269" key="5">
    <source>
    </source>
</evidence>
<evidence type="ECO:0000269" key="6">
    <source>
    </source>
</evidence>
<evidence type="ECO:0000303" key="7">
    <source>
    </source>
</evidence>
<evidence type="ECO:0000303" key="8">
    <source>
    </source>
</evidence>
<evidence type="ECO:0000303" key="9">
    <source>
    </source>
</evidence>
<evidence type="ECO:0000305" key="10"/>
<evidence type="ECO:0000312" key="11">
    <source>
        <dbReference type="EMBL" id="BAC79614.1"/>
    </source>
</evidence>
<evidence type="ECO:0000312" key="12">
    <source>
        <dbReference type="EMBL" id="BAF21727.1"/>
    </source>
</evidence>
<accession>Q8GU86</accession>
<accession>A0A0P0X6G5</accession>
<accession>Q0D5Z6</accession>
<accession>Q84ZQ8</accession>
<reference key="1">
    <citation type="journal article" date="2003" name="Plant Physiol.">
        <title>The ATP-binding cassette transporters: structure, function, and gene family comparison between rice and Arabidopsis.</title>
        <authorList>
            <person name="Jasinski M."/>
            <person name="Ducos E."/>
            <person name="Martinoia E."/>
            <person name="Boutry M."/>
        </authorList>
    </citation>
    <scope>NUCLEOTIDE SEQUENCE [GENOMIC DNA]</scope>
    <source>
        <strain>cv. Nipponbare</strain>
    </source>
</reference>
<reference key="2">
    <citation type="journal article" date="2005" name="Nature">
        <title>The map-based sequence of the rice genome.</title>
        <authorList>
            <consortium name="International rice genome sequencing project (IRGSP)"/>
        </authorList>
    </citation>
    <scope>NUCLEOTIDE SEQUENCE [LARGE SCALE GENOMIC DNA]</scope>
    <source>
        <strain>cv. Nipponbare</strain>
    </source>
</reference>
<reference key="3">
    <citation type="journal article" date="2008" name="Nucleic Acids Res.">
        <title>The rice annotation project database (RAP-DB): 2008 update.</title>
        <authorList>
            <consortium name="The rice annotation project (RAP)"/>
        </authorList>
    </citation>
    <scope>GENOME REANNOTATION</scope>
    <source>
        <strain>cv. Nipponbare</strain>
    </source>
</reference>
<reference key="4">
    <citation type="journal article" date="2013" name="Rice">
        <title>Improvement of the Oryza sativa Nipponbare reference genome using next generation sequence and optical map data.</title>
        <authorList>
            <person name="Kawahara Y."/>
            <person name="de la Bastide M."/>
            <person name="Hamilton J.P."/>
            <person name="Kanamori H."/>
            <person name="McCombie W.R."/>
            <person name="Ouyang S."/>
            <person name="Schwartz D.C."/>
            <person name="Tanaka T."/>
            <person name="Wu J."/>
            <person name="Zhou S."/>
            <person name="Childs K.L."/>
            <person name="Davidson R.M."/>
            <person name="Lin H."/>
            <person name="Quesada-Ocampo L."/>
            <person name="Vaillancourt B."/>
            <person name="Sakai H."/>
            <person name="Lee S.S."/>
            <person name="Kim J."/>
            <person name="Numa H."/>
            <person name="Itoh T."/>
            <person name="Buell C.R."/>
            <person name="Matsumoto T."/>
        </authorList>
    </citation>
    <scope>GENOME REANNOTATION</scope>
    <source>
        <strain>cv. Nipponbare</strain>
    </source>
</reference>
<reference key="5">
    <citation type="journal article" date="2003" name="Science">
        <title>Collection, mapping, and annotation of over 28,000 cDNA clones from japonica rice.</title>
        <authorList>
            <consortium name="The rice full-length cDNA consortium"/>
        </authorList>
    </citation>
    <scope>NUCLEOTIDE SEQUENCE [LARGE SCALE MRNA] OF 958-1454</scope>
    <source>
        <strain>cv. Nipponbare</strain>
    </source>
</reference>
<reference key="6">
    <citation type="journal article" date="2006" name="FEBS Lett.">
        <title>Organization and function of the plant pleiotropic drug resistance ABC transporter family.</title>
        <authorList>
            <person name="Crouzet J."/>
            <person name="Trombik T."/>
            <person name="Fraysse A.S."/>
            <person name="Boutry M."/>
        </authorList>
    </citation>
    <scope>GENE FAMILY</scope>
    <scope>NOMENCLATURE</scope>
</reference>
<reference key="7">
    <citation type="journal article" date="2008" name="Trends Plant Sci.">
        <title>Plant ABC proteins - a unified nomenclature and updated inventory.</title>
        <authorList>
            <person name="Verrier P.J."/>
            <person name="Bird D."/>
            <person name="Burla B."/>
            <person name="Dassa E."/>
            <person name="Forestier C."/>
            <person name="Geisler M."/>
            <person name="Klein M."/>
            <person name="Kolukisaoglu H.U."/>
            <person name="Lee Y."/>
            <person name="Martinoia E."/>
            <person name="Murphy A."/>
            <person name="Rea P.A."/>
            <person name="Samuels L."/>
            <person name="Schulz B."/>
            <person name="Spalding E.J."/>
            <person name="Yazaki K."/>
            <person name="Theodoulou F.L."/>
        </authorList>
    </citation>
    <scope>GENE FAMILY</scope>
    <scope>NOMENCLATURE</scope>
</reference>
<reference key="8">
    <citation type="journal article" date="2011" name="Biosci. Biotechnol. Biochem.">
        <title>Rice ABCG43 is Cd inducible and confers Cd tolerance on yeast.</title>
        <authorList>
            <person name="Oda K."/>
            <person name="Otani M."/>
            <person name="Uraguchi S."/>
            <person name="Akihiro T."/>
            <person name="Fujiwara T."/>
        </authorList>
    </citation>
    <scope>FUNCTION</scope>
    <scope>TISSUE SPECIFICITY</scope>
    <scope>INDUCTION BY CADMIUM</scope>
</reference>
<reference key="9">
    <citation type="journal article" date="2022" name="Front. Plant Sci.">
        <title>Advances in molecular mechanisms underlying cadmium uptake and translocation in rice.</title>
        <authorList>
            <person name="Ai H."/>
            <person name="Wu D."/>
            <person name="Li C."/>
            <person name="Hou M."/>
        </authorList>
    </citation>
    <scope>REVIEW ON CADMIUM UPTAKE IN RICE</scope>
</reference>
<reference key="10">
    <citation type="journal article" date="2023" name="J. Adv. Res.">
        <title>Cadmium accumulation regulated by a rice heavy-metal importer is harmful for host plant and leaf bacteria.</title>
        <authorList>
            <person name="Tian J."/>
            <person name="Wang L."/>
            <person name="Hui S."/>
            <person name="Yang D."/>
            <person name="He Y."/>
            <person name="Yuan M."/>
        </authorList>
    </citation>
    <scope>FUNCTION</scope>
    <scope>DISRUPTION PHENOTYPE</scope>
    <scope>SUBCELLULAR LOCATION</scope>
    <scope>TISSUE SPECIFICITY</scope>
    <scope>INDUCTION BY CADMIUM AND LEAF BACTERIA</scope>
    <source>
        <strain>cv. Zhonghua 11</strain>
    </source>
</reference>
<organism>
    <name type="scientific">Oryza sativa subsp. japonica</name>
    <name type="common">Rice</name>
    <dbReference type="NCBI Taxonomy" id="39947"/>
    <lineage>
        <taxon>Eukaryota</taxon>
        <taxon>Viridiplantae</taxon>
        <taxon>Streptophyta</taxon>
        <taxon>Embryophyta</taxon>
        <taxon>Tracheophyta</taxon>
        <taxon>Spermatophyta</taxon>
        <taxon>Magnoliopsida</taxon>
        <taxon>Liliopsida</taxon>
        <taxon>Poales</taxon>
        <taxon>Poaceae</taxon>
        <taxon>BOP clade</taxon>
        <taxon>Oryzoideae</taxon>
        <taxon>Oryzeae</taxon>
        <taxon>Oryzinae</taxon>
        <taxon>Oryza</taxon>
        <taxon>Oryza sativa</taxon>
    </lineage>
</organism>
<keyword id="KW-0067">ATP-binding</keyword>
<keyword id="KW-1003">Cell membrane</keyword>
<keyword id="KW-0325">Glycoprotein</keyword>
<keyword id="KW-0472">Membrane</keyword>
<keyword id="KW-0547">Nucleotide-binding</keyword>
<keyword id="KW-1185">Reference proteome</keyword>
<keyword id="KW-0677">Repeat</keyword>
<keyword id="KW-1278">Translocase</keyword>
<keyword id="KW-0812">Transmembrane</keyword>
<keyword id="KW-1133">Transmembrane helix</keyword>
<keyword id="KW-0813">Transport</keyword>
<dbReference type="EC" id="7.2.2.-" evidence="6"/>
<dbReference type="EMBL" id="AJ535050">
    <property type="protein sequence ID" value="CAD59572.1"/>
    <property type="status" value="ALT_SEQ"/>
    <property type="molecule type" value="Genomic_DNA"/>
</dbReference>
<dbReference type="EMBL" id="AP003827">
    <property type="protein sequence ID" value="BAC79614.1"/>
    <property type="molecule type" value="Genomic_DNA"/>
</dbReference>
<dbReference type="EMBL" id="AP008213">
    <property type="protein sequence ID" value="BAF21727.1"/>
    <property type="status" value="ALT_SEQ"/>
    <property type="molecule type" value="Genomic_DNA"/>
</dbReference>
<dbReference type="EMBL" id="AP014963">
    <property type="protein sequence ID" value="BAT01819.1"/>
    <property type="status" value="ALT_SEQ"/>
    <property type="molecule type" value="Genomic_DNA"/>
</dbReference>
<dbReference type="EMBL" id="AK105311">
    <property type="status" value="NOT_ANNOTATED_CDS"/>
    <property type="molecule type" value="mRNA"/>
</dbReference>
<dbReference type="RefSeq" id="XP_015646575.1">
    <property type="nucleotide sequence ID" value="XM_015791089.1"/>
</dbReference>
<dbReference type="SMR" id="Q8GU86"/>
<dbReference type="FunCoup" id="Q8GU86">
    <property type="interactions" value="511"/>
</dbReference>
<dbReference type="STRING" id="39947.Q8GU86"/>
<dbReference type="PaxDb" id="39947-Q8GU86"/>
<dbReference type="EnsemblPlants" id="Os07t0522500-01">
    <property type="protein sequence ID" value="Os07t0522500-01"/>
    <property type="gene ID" value="Os07g0522500"/>
</dbReference>
<dbReference type="Gramene" id="Os07t0522500-01">
    <property type="protein sequence ID" value="Os07t0522500-01"/>
    <property type="gene ID" value="Os07g0522500"/>
</dbReference>
<dbReference type="KEGG" id="dosa:Os07g0522500"/>
<dbReference type="eggNOG" id="KOG0065">
    <property type="taxonomic scope" value="Eukaryota"/>
</dbReference>
<dbReference type="InParanoid" id="Q8GU86"/>
<dbReference type="OrthoDB" id="66620at2759"/>
<dbReference type="Proteomes" id="UP000000763">
    <property type="component" value="Chromosome 7"/>
</dbReference>
<dbReference type="Proteomes" id="UP000059680">
    <property type="component" value="Chromosome 7"/>
</dbReference>
<dbReference type="GO" id="GO:0005886">
    <property type="term" value="C:plasma membrane"/>
    <property type="evidence" value="ECO:0000314"/>
    <property type="project" value="UniProtKB"/>
</dbReference>
<dbReference type="GO" id="GO:0015434">
    <property type="term" value="F:ABC-type cadmium transporter activity"/>
    <property type="evidence" value="ECO:0000315"/>
    <property type="project" value="UniProtKB"/>
</dbReference>
<dbReference type="GO" id="GO:0005524">
    <property type="term" value="F:ATP binding"/>
    <property type="evidence" value="ECO:0007669"/>
    <property type="project" value="UniProtKB-KW"/>
</dbReference>
<dbReference type="GO" id="GO:0016887">
    <property type="term" value="F:ATP hydrolysis activity"/>
    <property type="evidence" value="ECO:0007669"/>
    <property type="project" value="InterPro"/>
</dbReference>
<dbReference type="GO" id="GO:0015691">
    <property type="term" value="P:cadmium ion transport"/>
    <property type="evidence" value="ECO:0000315"/>
    <property type="project" value="UniProtKB"/>
</dbReference>
<dbReference type="GO" id="GO:0042742">
    <property type="term" value="P:defense response to bacterium"/>
    <property type="evidence" value="ECO:0000315"/>
    <property type="project" value="UniProtKB"/>
</dbReference>
<dbReference type="GO" id="GO:0098657">
    <property type="term" value="P:import into cell"/>
    <property type="evidence" value="ECO:0000315"/>
    <property type="project" value="UniProtKB"/>
</dbReference>
<dbReference type="GO" id="GO:0009617">
    <property type="term" value="P:response to bacterium"/>
    <property type="evidence" value="ECO:0000270"/>
    <property type="project" value="UniProtKB"/>
</dbReference>
<dbReference type="GO" id="GO:0046686">
    <property type="term" value="P:response to cadmium ion"/>
    <property type="evidence" value="ECO:0000270"/>
    <property type="project" value="UniProtKB"/>
</dbReference>
<dbReference type="CDD" id="cd03233">
    <property type="entry name" value="ABCG_PDR_domain1"/>
    <property type="match status" value="1"/>
</dbReference>
<dbReference type="CDD" id="cd03232">
    <property type="entry name" value="ABCG_PDR_domain2"/>
    <property type="match status" value="1"/>
</dbReference>
<dbReference type="FunFam" id="3.40.50.300:FF:000157">
    <property type="entry name" value="ABC transporter G family member 34"/>
    <property type="match status" value="1"/>
</dbReference>
<dbReference type="FunFam" id="3.40.50.300:FF:000179">
    <property type="entry name" value="ABC transporter G family member 34"/>
    <property type="match status" value="1"/>
</dbReference>
<dbReference type="Gene3D" id="3.40.50.300">
    <property type="entry name" value="P-loop containing nucleotide triphosphate hydrolases"/>
    <property type="match status" value="2"/>
</dbReference>
<dbReference type="InterPro" id="IPR003593">
    <property type="entry name" value="AAA+_ATPase"/>
</dbReference>
<dbReference type="InterPro" id="IPR013525">
    <property type="entry name" value="ABC2_TM"/>
</dbReference>
<dbReference type="InterPro" id="IPR029481">
    <property type="entry name" value="ABC_trans_N"/>
</dbReference>
<dbReference type="InterPro" id="IPR003439">
    <property type="entry name" value="ABC_transporter-like_ATP-bd"/>
</dbReference>
<dbReference type="InterPro" id="IPR043926">
    <property type="entry name" value="ABCG_dom"/>
</dbReference>
<dbReference type="InterPro" id="IPR034001">
    <property type="entry name" value="ABCG_PDR_1"/>
</dbReference>
<dbReference type="InterPro" id="IPR034003">
    <property type="entry name" value="ABCG_PDR_2"/>
</dbReference>
<dbReference type="InterPro" id="IPR027417">
    <property type="entry name" value="P-loop_NTPase"/>
</dbReference>
<dbReference type="InterPro" id="IPR013581">
    <property type="entry name" value="PDR_assoc"/>
</dbReference>
<dbReference type="PANTHER" id="PTHR48040:SF55">
    <property type="entry name" value="OS02G0318500 PROTEIN"/>
    <property type="match status" value="1"/>
</dbReference>
<dbReference type="PANTHER" id="PTHR48040">
    <property type="entry name" value="PLEIOTROPIC DRUG RESISTANCE PROTEIN 1-LIKE ISOFORM X1"/>
    <property type="match status" value="1"/>
</dbReference>
<dbReference type="Pfam" id="PF01061">
    <property type="entry name" value="ABC2_membrane"/>
    <property type="match status" value="2"/>
</dbReference>
<dbReference type="Pfam" id="PF19055">
    <property type="entry name" value="ABC2_membrane_7"/>
    <property type="match status" value="1"/>
</dbReference>
<dbReference type="Pfam" id="PF00005">
    <property type="entry name" value="ABC_tran"/>
    <property type="match status" value="2"/>
</dbReference>
<dbReference type="Pfam" id="PF14510">
    <property type="entry name" value="ABC_trans_N"/>
    <property type="match status" value="1"/>
</dbReference>
<dbReference type="Pfam" id="PF08370">
    <property type="entry name" value="PDR_assoc"/>
    <property type="match status" value="1"/>
</dbReference>
<dbReference type="SMART" id="SM00382">
    <property type="entry name" value="AAA"/>
    <property type="match status" value="2"/>
</dbReference>
<dbReference type="SUPFAM" id="SSF52540">
    <property type="entry name" value="P-loop containing nucleoside triphosphate hydrolases"/>
    <property type="match status" value="2"/>
</dbReference>
<dbReference type="PROSITE" id="PS50893">
    <property type="entry name" value="ABC_TRANSPORTER_2"/>
    <property type="match status" value="2"/>
</dbReference>